<organism>
    <name type="scientific">Saccharolobus islandicus (strain L.S.2.15 / Lassen #1)</name>
    <name type="common">Sulfolobus islandicus</name>
    <dbReference type="NCBI Taxonomy" id="429572"/>
    <lineage>
        <taxon>Archaea</taxon>
        <taxon>Thermoproteota</taxon>
        <taxon>Thermoprotei</taxon>
        <taxon>Sulfolobales</taxon>
        <taxon>Sulfolobaceae</taxon>
        <taxon>Saccharolobus</taxon>
    </lineage>
</organism>
<accession>C3MPR6</accession>
<feature type="chain" id="PRO_1000212144" description="Putative HTH-type transcriptional regulatory protein LS215_1371">
    <location>
        <begin position="1"/>
        <end position="310"/>
    </location>
</feature>
<feature type="domain" description="HTH cro/C1-type" evidence="1">
    <location>
        <begin position="125"/>
        <end position="180"/>
    </location>
</feature>
<feature type="DNA-binding region" description="H-T-H motif" evidence="1">
    <location>
        <begin position="136"/>
        <end position="155"/>
    </location>
</feature>
<name>Y1371_SACI2</name>
<evidence type="ECO:0000255" key="1">
    <source>
        <dbReference type="HAMAP-Rule" id="MF_00584"/>
    </source>
</evidence>
<sequence length="310" mass="35557">MSKKIINEVIDILEDKKYTYTMIEYPEHNRKSVDIVLNSKEPTLIRVSEDKVTKEEISDLKKIAVSTLTASLVVTNEEEEDIVSVKADNVFAVSPEGFKKVINGEKIFLYRTRGGIFIKIRNYILKHKREEMGYSIGDVAKFLGVSRKAIYDYEKGDSDVSLEVAEKLIDLFGDDIIGDVIWDSIKGKKEVIKEDITEFSPESFKSKLIYKLKENGLNILSLKLTAADLIVKDNENNRYLVTIENKDYNKSMKKFYEAKKLASYTKSELLIIIRTSKMLKECEDLGYKTYEENDIHSLIDEIKGSNGRQS</sequence>
<dbReference type="EMBL" id="CP001399">
    <property type="protein sequence ID" value="ACP35379.1"/>
    <property type="molecule type" value="Genomic_DNA"/>
</dbReference>
<dbReference type="RefSeq" id="WP_012713665.1">
    <property type="nucleotide sequence ID" value="NC_012589.1"/>
</dbReference>
<dbReference type="SMR" id="C3MPR6"/>
<dbReference type="GeneID" id="7797887"/>
<dbReference type="KEGG" id="sis:LS215_1371"/>
<dbReference type="HOGENOM" id="CLU_075726_1_0_2"/>
<dbReference type="OrthoDB" id="31424at2157"/>
<dbReference type="Proteomes" id="UP000001747">
    <property type="component" value="Chromosome"/>
</dbReference>
<dbReference type="GO" id="GO:0003677">
    <property type="term" value="F:DNA binding"/>
    <property type="evidence" value="ECO:0007669"/>
    <property type="project" value="UniProtKB-KW"/>
</dbReference>
<dbReference type="GO" id="GO:0003700">
    <property type="term" value="F:DNA-binding transcription factor activity"/>
    <property type="evidence" value="ECO:0007669"/>
    <property type="project" value="UniProtKB-UniRule"/>
</dbReference>
<dbReference type="CDD" id="cd00093">
    <property type="entry name" value="HTH_XRE"/>
    <property type="match status" value="1"/>
</dbReference>
<dbReference type="Gene3D" id="1.10.260.40">
    <property type="entry name" value="lambda repressor-like DNA-binding domains"/>
    <property type="match status" value="1"/>
</dbReference>
<dbReference type="HAMAP" id="MF_00584">
    <property type="entry name" value="HTH_type_cro_C1"/>
    <property type="match status" value="1"/>
</dbReference>
<dbReference type="InterPro" id="IPR020886">
    <property type="entry name" value="Arc_TR_HTH"/>
</dbReference>
<dbReference type="InterPro" id="IPR001387">
    <property type="entry name" value="Cro/C1-type_HTH"/>
</dbReference>
<dbReference type="InterPro" id="IPR010982">
    <property type="entry name" value="Lambda_DNA-bd_dom_sf"/>
</dbReference>
<dbReference type="Pfam" id="PF01381">
    <property type="entry name" value="HTH_3"/>
    <property type="match status" value="1"/>
</dbReference>
<dbReference type="SMART" id="SM00530">
    <property type="entry name" value="HTH_XRE"/>
    <property type="match status" value="1"/>
</dbReference>
<dbReference type="SUPFAM" id="SSF47413">
    <property type="entry name" value="lambda repressor-like DNA-binding domains"/>
    <property type="match status" value="1"/>
</dbReference>
<dbReference type="PROSITE" id="PS50943">
    <property type="entry name" value="HTH_CROC1"/>
    <property type="match status" value="1"/>
</dbReference>
<gene>
    <name type="ordered locus">LS215_1371</name>
</gene>
<keyword id="KW-0238">DNA-binding</keyword>
<keyword id="KW-0804">Transcription</keyword>
<keyword id="KW-0805">Transcription regulation</keyword>
<reference key="1">
    <citation type="journal article" date="2009" name="Proc. Natl. Acad. Sci. U.S.A.">
        <title>Biogeography of the Sulfolobus islandicus pan-genome.</title>
        <authorList>
            <person name="Reno M.L."/>
            <person name="Held N.L."/>
            <person name="Fields C.J."/>
            <person name="Burke P.V."/>
            <person name="Whitaker R.J."/>
        </authorList>
    </citation>
    <scope>NUCLEOTIDE SEQUENCE [LARGE SCALE GENOMIC DNA]</scope>
    <source>
        <strain>L.S.2.15 / Lassen #1</strain>
    </source>
</reference>
<protein>
    <recommendedName>
        <fullName evidence="1">Putative HTH-type transcriptional regulatory protein LS215_1371</fullName>
    </recommendedName>
</protein>
<proteinExistence type="inferred from homology"/>